<sequence>MKKMAIACALLSSVVASSVWADAASSLKSRLDKVSSFHATFTQKVTDGSGAAVQEGQGDLWVKRPNLFNWHMTQPDESILVSDGKTLWFYNPFVEQATATWLKDATGNTPFMLIARNQASDWQQYNIKQDGDNFVLTPKASNGNLKQFTINVGRDGTIHQFSAVEQDDQRSAYQLKSQQNGAVDPSKFTFTPPQGVTIDDQRK</sequence>
<accession>B4T126</accession>
<name>LOLA_SALNS</name>
<comment type="function">
    <text evidence="1">Participates in the translocation of lipoproteins from the inner membrane to the outer membrane. Only forms a complex with a lipoprotein if the residue after the N-terminal Cys is not an aspartate (The Asp acts as a targeting signal to indicate that the lipoprotein should stay in the inner membrane).</text>
</comment>
<comment type="subunit">
    <text evidence="1">Monomer.</text>
</comment>
<comment type="subcellular location">
    <subcellularLocation>
        <location evidence="1">Periplasm</location>
    </subcellularLocation>
</comment>
<comment type="similarity">
    <text evidence="1">Belongs to the LolA family.</text>
</comment>
<organism>
    <name type="scientific">Salmonella newport (strain SL254)</name>
    <dbReference type="NCBI Taxonomy" id="423368"/>
    <lineage>
        <taxon>Bacteria</taxon>
        <taxon>Pseudomonadati</taxon>
        <taxon>Pseudomonadota</taxon>
        <taxon>Gammaproteobacteria</taxon>
        <taxon>Enterobacterales</taxon>
        <taxon>Enterobacteriaceae</taxon>
        <taxon>Salmonella</taxon>
    </lineage>
</organism>
<keyword id="KW-0143">Chaperone</keyword>
<keyword id="KW-0574">Periplasm</keyword>
<keyword id="KW-0653">Protein transport</keyword>
<keyword id="KW-0732">Signal</keyword>
<keyword id="KW-0813">Transport</keyword>
<feature type="signal peptide" evidence="1">
    <location>
        <begin position="1"/>
        <end position="21"/>
    </location>
</feature>
<feature type="chain" id="PRO_1000100726" description="Outer-membrane lipoprotein carrier protein">
    <location>
        <begin position="22"/>
        <end position="203"/>
    </location>
</feature>
<feature type="region of interest" description="Disordered" evidence="2">
    <location>
        <begin position="178"/>
        <end position="203"/>
    </location>
</feature>
<evidence type="ECO:0000255" key="1">
    <source>
        <dbReference type="HAMAP-Rule" id="MF_00240"/>
    </source>
</evidence>
<evidence type="ECO:0000256" key="2">
    <source>
        <dbReference type="SAM" id="MobiDB-lite"/>
    </source>
</evidence>
<dbReference type="EMBL" id="CP001113">
    <property type="protein sequence ID" value="ACF64274.1"/>
    <property type="molecule type" value="Genomic_DNA"/>
</dbReference>
<dbReference type="RefSeq" id="WP_001519746.1">
    <property type="nucleotide sequence ID" value="NZ_CCMR01000003.1"/>
</dbReference>
<dbReference type="SMR" id="B4T126"/>
<dbReference type="KEGG" id="see:SNSL254_A0995"/>
<dbReference type="HOGENOM" id="CLU_087560_1_1_6"/>
<dbReference type="Proteomes" id="UP000008824">
    <property type="component" value="Chromosome"/>
</dbReference>
<dbReference type="GO" id="GO:0030288">
    <property type="term" value="C:outer membrane-bounded periplasmic space"/>
    <property type="evidence" value="ECO:0007669"/>
    <property type="project" value="TreeGrafter"/>
</dbReference>
<dbReference type="GO" id="GO:0044874">
    <property type="term" value="P:lipoprotein localization to outer membrane"/>
    <property type="evidence" value="ECO:0007669"/>
    <property type="project" value="UniProtKB-UniRule"/>
</dbReference>
<dbReference type="GO" id="GO:0042953">
    <property type="term" value="P:lipoprotein transport"/>
    <property type="evidence" value="ECO:0007669"/>
    <property type="project" value="InterPro"/>
</dbReference>
<dbReference type="CDD" id="cd16325">
    <property type="entry name" value="LolA"/>
    <property type="match status" value="1"/>
</dbReference>
<dbReference type="FunFam" id="2.50.20.10:FF:000001">
    <property type="entry name" value="Outer-membrane lipoprotein carrier protein"/>
    <property type="match status" value="1"/>
</dbReference>
<dbReference type="Gene3D" id="2.50.20.10">
    <property type="entry name" value="Lipoprotein localisation LolA/LolB/LppX"/>
    <property type="match status" value="1"/>
</dbReference>
<dbReference type="HAMAP" id="MF_00240">
    <property type="entry name" value="LolA"/>
    <property type="match status" value="1"/>
</dbReference>
<dbReference type="InterPro" id="IPR029046">
    <property type="entry name" value="LolA/LolB/LppX"/>
</dbReference>
<dbReference type="InterPro" id="IPR004564">
    <property type="entry name" value="OM_lipoprot_carrier_LolA-like"/>
</dbReference>
<dbReference type="InterPro" id="IPR018323">
    <property type="entry name" value="OM_lipoprot_carrier_LolA_Pbac"/>
</dbReference>
<dbReference type="NCBIfam" id="TIGR00547">
    <property type="entry name" value="lolA"/>
    <property type="match status" value="1"/>
</dbReference>
<dbReference type="PANTHER" id="PTHR35869">
    <property type="entry name" value="OUTER-MEMBRANE LIPOPROTEIN CARRIER PROTEIN"/>
    <property type="match status" value="1"/>
</dbReference>
<dbReference type="PANTHER" id="PTHR35869:SF1">
    <property type="entry name" value="OUTER-MEMBRANE LIPOPROTEIN CARRIER PROTEIN"/>
    <property type="match status" value="1"/>
</dbReference>
<dbReference type="Pfam" id="PF03548">
    <property type="entry name" value="LolA"/>
    <property type="match status" value="1"/>
</dbReference>
<dbReference type="SUPFAM" id="SSF89392">
    <property type="entry name" value="Prokaryotic lipoproteins and lipoprotein localization factors"/>
    <property type="match status" value="1"/>
</dbReference>
<protein>
    <recommendedName>
        <fullName evidence="1">Outer-membrane lipoprotein carrier protein</fullName>
    </recommendedName>
</protein>
<gene>
    <name evidence="1" type="primary">lolA</name>
    <name type="ordered locus">SNSL254_A0995</name>
</gene>
<reference key="1">
    <citation type="journal article" date="2011" name="J. Bacteriol.">
        <title>Comparative genomics of 28 Salmonella enterica isolates: evidence for CRISPR-mediated adaptive sublineage evolution.</title>
        <authorList>
            <person name="Fricke W.F."/>
            <person name="Mammel M.K."/>
            <person name="McDermott P.F."/>
            <person name="Tartera C."/>
            <person name="White D.G."/>
            <person name="Leclerc J.E."/>
            <person name="Ravel J."/>
            <person name="Cebula T.A."/>
        </authorList>
    </citation>
    <scope>NUCLEOTIDE SEQUENCE [LARGE SCALE GENOMIC DNA]</scope>
    <source>
        <strain>SL254</strain>
    </source>
</reference>
<proteinExistence type="inferred from homology"/>